<gene>
    <name evidence="1" type="primary">clpP</name>
    <name type="ordered locus">BruAb1_1115</name>
</gene>
<comment type="function">
    <text evidence="1">Cleaves peptides in various proteins in a process that requires ATP hydrolysis. Has a chymotrypsin-like activity. Plays a major role in the degradation of misfolded proteins.</text>
</comment>
<comment type="catalytic activity">
    <reaction evidence="1">
        <text>Hydrolysis of proteins to small peptides in the presence of ATP and magnesium. alpha-casein is the usual test substrate. In the absence of ATP, only oligopeptides shorter than five residues are hydrolyzed (such as succinyl-Leu-Tyr-|-NHMec, and Leu-Tyr-Leu-|-Tyr-Trp, in which cleavage of the -Tyr-|-Leu- and -Tyr-|-Trp bonds also occurs).</text>
        <dbReference type="EC" id="3.4.21.92"/>
    </reaction>
</comment>
<comment type="subunit">
    <text evidence="1">Fourteen ClpP subunits assemble into 2 heptameric rings which stack back to back to give a disk-like structure with a central cavity, resembling the structure of eukaryotic proteasomes.</text>
</comment>
<comment type="subcellular location">
    <subcellularLocation>
        <location evidence="1">Cytoplasm</location>
    </subcellularLocation>
</comment>
<comment type="similarity">
    <text evidence="1">Belongs to the peptidase S14 family.</text>
</comment>
<protein>
    <recommendedName>
        <fullName evidence="1">ATP-dependent Clp protease proteolytic subunit</fullName>
        <ecNumber evidence="1">3.4.21.92</ecNumber>
    </recommendedName>
    <alternativeName>
        <fullName evidence="1">Endopeptidase Clp</fullName>
    </alternativeName>
</protein>
<evidence type="ECO:0000255" key="1">
    <source>
        <dbReference type="HAMAP-Rule" id="MF_00444"/>
    </source>
</evidence>
<sequence length="209" mass="23424">MRDPIETVMNLVPMVVEQTNRGERAYDIFSRLLKERIIFVNGPVEDGMSMLVCAQLLFLEAENPKKEINMYINSPGGVVTSGMAIYDTMQFIRPPVSTLCMGQAASMGSLLLTAGATGHRYALPNARIMVHQPSGGFQGQASDIERHAQDIIKMKRRLNEIYVKHTGRDYDTIERTLDRDHFMTAQEALEFGLIDKVVEARDVSADESK</sequence>
<name>CLPP_BRUAB</name>
<dbReference type="EC" id="3.4.21.92" evidence="1"/>
<dbReference type="EMBL" id="AF218420">
    <property type="protein sequence ID" value="AAF32318.1"/>
    <property type="molecule type" value="Genomic_DNA"/>
</dbReference>
<dbReference type="EMBL" id="AE017223">
    <property type="protein sequence ID" value="AAX74456.1"/>
    <property type="molecule type" value="Genomic_DNA"/>
</dbReference>
<dbReference type="RefSeq" id="WP_002964237.1">
    <property type="nucleotide sequence ID" value="NC_006932.1"/>
</dbReference>
<dbReference type="SMR" id="Q9L7X6"/>
<dbReference type="MEROPS" id="S14.001"/>
<dbReference type="EnsemblBacteria" id="AAX74456">
    <property type="protein sequence ID" value="AAX74456"/>
    <property type="gene ID" value="BruAb1_1115"/>
</dbReference>
<dbReference type="KEGG" id="bmb:BruAb1_1115"/>
<dbReference type="HOGENOM" id="CLU_058707_3_2_5"/>
<dbReference type="PRO" id="PR:Q9L7X6"/>
<dbReference type="Proteomes" id="UP000000540">
    <property type="component" value="Chromosome I"/>
</dbReference>
<dbReference type="GO" id="GO:0005737">
    <property type="term" value="C:cytoplasm"/>
    <property type="evidence" value="ECO:0007669"/>
    <property type="project" value="UniProtKB-SubCell"/>
</dbReference>
<dbReference type="GO" id="GO:0009368">
    <property type="term" value="C:endopeptidase Clp complex"/>
    <property type="evidence" value="ECO:0007669"/>
    <property type="project" value="TreeGrafter"/>
</dbReference>
<dbReference type="GO" id="GO:0004176">
    <property type="term" value="F:ATP-dependent peptidase activity"/>
    <property type="evidence" value="ECO:0007669"/>
    <property type="project" value="InterPro"/>
</dbReference>
<dbReference type="GO" id="GO:0051117">
    <property type="term" value="F:ATPase binding"/>
    <property type="evidence" value="ECO:0007669"/>
    <property type="project" value="TreeGrafter"/>
</dbReference>
<dbReference type="GO" id="GO:0004252">
    <property type="term" value="F:serine-type endopeptidase activity"/>
    <property type="evidence" value="ECO:0007669"/>
    <property type="project" value="UniProtKB-UniRule"/>
</dbReference>
<dbReference type="GO" id="GO:0006515">
    <property type="term" value="P:protein quality control for misfolded or incompletely synthesized proteins"/>
    <property type="evidence" value="ECO:0007669"/>
    <property type="project" value="TreeGrafter"/>
</dbReference>
<dbReference type="CDD" id="cd07017">
    <property type="entry name" value="S14_ClpP_2"/>
    <property type="match status" value="1"/>
</dbReference>
<dbReference type="FunFam" id="3.90.226.10:FF:000001">
    <property type="entry name" value="ATP-dependent Clp protease proteolytic subunit"/>
    <property type="match status" value="1"/>
</dbReference>
<dbReference type="Gene3D" id="3.90.226.10">
    <property type="entry name" value="2-enoyl-CoA Hydratase, Chain A, domain 1"/>
    <property type="match status" value="1"/>
</dbReference>
<dbReference type="HAMAP" id="MF_00444">
    <property type="entry name" value="ClpP"/>
    <property type="match status" value="1"/>
</dbReference>
<dbReference type="InterPro" id="IPR001907">
    <property type="entry name" value="ClpP"/>
</dbReference>
<dbReference type="InterPro" id="IPR029045">
    <property type="entry name" value="ClpP/crotonase-like_dom_sf"/>
</dbReference>
<dbReference type="InterPro" id="IPR023562">
    <property type="entry name" value="ClpP/TepA"/>
</dbReference>
<dbReference type="InterPro" id="IPR033135">
    <property type="entry name" value="ClpP_His_AS"/>
</dbReference>
<dbReference type="InterPro" id="IPR018215">
    <property type="entry name" value="ClpP_Ser_AS"/>
</dbReference>
<dbReference type="NCBIfam" id="NF001368">
    <property type="entry name" value="PRK00277.1"/>
    <property type="match status" value="1"/>
</dbReference>
<dbReference type="NCBIfam" id="NF009205">
    <property type="entry name" value="PRK12553.1"/>
    <property type="match status" value="1"/>
</dbReference>
<dbReference type="PANTHER" id="PTHR10381">
    <property type="entry name" value="ATP-DEPENDENT CLP PROTEASE PROTEOLYTIC SUBUNIT"/>
    <property type="match status" value="1"/>
</dbReference>
<dbReference type="PANTHER" id="PTHR10381:SF70">
    <property type="entry name" value="ATP-DEPENDENT CLP PROTEASE PROTEOLYTIC SUBUNIT"/>
    <property type="match status" value="1"/>
</dbReference>
<dbReference type="Pfam" id="PF00574">
    <property type="entry name" value="CLP_protease"/>
    <property type="match status" value="1"/>
</dbReference>
<dbReference type="PRINTS" id="PR00127">
    <property type="entry name" value="CLPPROTEASEP"/>
</dbReference>
<dbReference type="SUPFAM" id="SSF52096">
    <property type="entry name" value="ClpP/crotonase"/>
    <property type="match status" value="1"/>
</dbReference>
<dbReference type="PROSITE" id="PS00382">
    <property type="entry name" value="CLP_PROTEASE_HIS"/>
    <property type="match status" value="1"/>
</dbReference>
<dbReference type="PROSITE" id="PS00381">
    <property type="entry name" value="CLP_PROTEASE_SER"/>
    <property type="match status" value="1"/>
</dbReference>
<organism>
    <name type="scientific">Brucella abortus biovar 1 (strain 9-941)</name>
    <dbReference type="NCBI Taxonomy" id="262698"/>
    <lineage>
        <taxon>Bacteria</taxon>
        <taxon>Pseudomonadati</taxon>
        <taxon>Pseudomonadota</taxon>
        <taxon>Alphaproteobacteria</taxon>
        <taxon>Hyphomicrobiales</taxon>
        <taxon>Brucellaceae</taxon>
        <taxon>Brucella/Ochrobactrum group</taxon>
        <taxon>Brucella</taxon>
    </lineage>
</organism>
<proteinExistence type="inferred from homology"/>
<accession>Q9L7X6</accession>
<accession>Q57D28</accession>
<feature type="chain" id="PRO_0000179516" description="ATP-dependent Clp protease proteolytic subunit">
    <location>
        <begin position="1"/>
        <end position="209"/>
    </location>
</feature>
<feature type="active site" description="Nucleophile" evidence="1">
    <location>
        <position position="106"/>
    </location>
</feature>
<feature type="active site" evidence="1">
    <location>
        <position position="131"/>
    </location>
</feature>
<keyword id="KW-0963">Cytoplasm</keyword>
<keyword id="KW-0378">Hydrolase</keyword>
<keyword id="KW-0645">Protease</keyword>
<keyword id="KW-0720">Serine protease</keyword>
<reference key="1">
    <citation type="submission" date="1999-12" db="EMBL/GenBank/DDBJ databases">
        <title>The Brucella abortus clpP and clpX are not subject to classical heat shock regulation and are critical for cell viability.</title>
        <authorList>
            <person name="Robertson G.T."/>
            <person name="Roop R.M. II"/>
        </authorList>
    </citation>
    <scope>NUCLEOTIDE SEQUENCE [GENOMIC DNA]</scope>
</reference>
<reference key="2">
    <citation type="journal article" date="2005" name="J. Bacteriol.">
        <title>Completion of the genome sequence of Brucella abortus and comparison to the highly similar genomes of Brucella melitensis and Brucella suis.</title>
        <authorList>
            <person name="Halling S.M."/>
            <person name="Peterson-Burch B.D."/>
            <person name="Bricker B.J."/>
            <person name="Zuerner R.L."/>
            <person name="Qing Z."/>
            <person name="Li L.-L."/>
            <person name="Kapur V."/>
            <person name="Alt D.P."/>
            <person name="Olsen S.C."/>
        </authorList>
    </citation>
    <scope>NUCLEOTIDE SEQUENCE [LARGE SCALE GENOMIC DNA]</scope>
    <source>
        <strain>9-941</strain>
    </source>
</reference>